<proteinExistence type="inferred from homology"/>
<organism>
    <name type="scientific">Staphylococcus aureus (strain MRSA252)</name>
    <dbReference type="NCBI Taxonomy" id="282458"/>
    <lineage>
        <taxon>Bacteria</taxon>
        <taxon>Bacillati</taxon>
        <taxon>Bacillota</taxon>
        <taxon>Bacilli</taxon>
        <taxon>Bacillales</taxon>
        <taxon>Staphylococcaceae</taxon>
        <taxon>Staphylococcus</taxon>
    </lineage>
</organism>
<keyword id="KW-0067">ATP-binding</keyword>
<keyword id="KW-1003">Cell membrane</keyword>
<keyword id="KW-0418">Kinase</keyword>
<keyword id="KW-0472">Membrane</keyword>
<keyword id="KW-0479">Metal-binding</keyword>
<keyword id="KW-0547">Nucleotide-binding</keyword>
<keyword id="KW-0597">Phosphoprotein</keyword>
<keyword id="KW-0808">Transferase</keyword>
<keyword id="KW-0812">Transmembrane</keyword>
<keyword id="KW-1133">Transmembrane helix</keyword>
<keyword id="KW-0902">Two-component regulatory system</keyword>
<keyword id="KW-0862">Zinc</keyword>
<sequence>MKWLKQLQSLHTKLVIVYVLLIIIGMQIIGLYFTNNLEKELLDNFKKNITQYAKQLEISIEKVYDEKGSVNAQKDIQNLLSEYANRQEIGEIRFIDKDQIIIATTKQSNRSLINQKANDSSVQKALSLGQSNDHLILKDYGGGKDRVWVYNIPVKVDKKVIGNIYIESKINDVYNQLNNINQIFIVGTAISLLITVILGFFIARTITKPITDMRNQTVEMSRGNYTQRVKIYGNDEIGELALAFNNLSKRVQEAQANTESEKRRLDSVITHMSDGIIATDRRGRIRIVNDMALKMLGMAKEDIIGYYMLSVLSLEDEFKLEEIQENNDSFLLDLNEEEGLIARVNFSTIVQETGFVTGYIAVLHDVTEQQQVERERREFVANVSHELRTPLTSMNSYIEALEEGAWKDEELAPQFLSVTREETERMIRLVNDLLQLSKMDNESDQINKEIIDFNMFINKIINRHEMSTKDTTFIRDIPKKTIFTEFDPDKMTQVFDNVITNAMKYSRGDKRVEFHVKQNPLYNRMTIRIKDNGIGIPINKVDKIFDRFYRVDKARTRKMGGTGLGLAISKEIVEAHNGRIWANSVEGQGTSIFITLPCEVIEDGDWDE</sequence>
<accession>Q6GKS6</accession>
<reference key="1">
    <citation type="journal article" date="2004" name="Proc. Natl. Acad. Sci. U.S.A.">
        <title>Complete genomes of two clinical Staphylococcus aureus strains: evidence for the rapid evolution of virulence and drug resistance.</title>
        <authorList>
            <person name="Holden M.T.G."/>
            <person name="Feil E.J."/>
            <person name="Lindsay J.A."/>
            <person name="Peacock S.J."/>
            <person name="Day N.P.J."/>
            <person name="Enright M.C."/>
            <person name="Foster T.J."/>
            <person name="Moore C.E."/>
            <person name="Hurst L."/>
            <person name="Atkin R."/>
            <person name="Barron A."/>
            <person name="Bason N."/>
            <person name="Bentley S.D."/>
            <person name="Chillingworth C."/>
            <person name="Chillingworth T."/>
            <person name="Churcher C."/>
            <person name="Clark L."/>
            <person name="Corton C."/>
            <person name="Cronin A."/>
            <person name="Doggett J."/>
            <person name="Dowd L."/>
            <person name="Feltwell T."/>
            <person name="Hance Z."/>
            <person name="Harris B."/>
            <person name="Hauser H."/>
            <person name="Holroyd S."/>
            <person name="Jagels K."/>
            <person name="James K.D."/>
            <person name="Lennard N."/>
            <person name="Line A."/>
            <person name="Mayes R."/>
            <person name="Moule S."/>
            <person name="Mungall K."/>
            <person name="Ormond D."/>
            <person name="Quail M.A."/>
            <person name="Rabbinowitsch E."/>
            <person name="Rutherford K.M."/>
            <person name="Sanders M."/>
            <person name="Sharp S."/>
            <person name="Simmonds M."/>
            <person name="Stevens K."/>
            <person name="Whitehead S."/>
            <person name="Barrell B.G."/>
            <person name="Spratt B.G."/>
            <person name="Parkhill J."/>
        </authorList>
    </citation>
    <scope>NUCLEOTIDE SEQUENCE [LARGE SCALE GENOMIC DNA]</scope>
    <source>
        <strain>MRSA252</strain>
    </source>
</reference>
<comment type="function">
    <text evidence="3">Member of the two-component regulatory system WalK/WalR that regulates genes involved in cell wall metabolism, virulence regulation, biofilm production, oxidative stress resistance and antibiotic resistance via direct or indirect regulation of autolysins. Functions as a sensor protein kinase which is autophosphorylated at a histidine residue in the dimerization domain and transfers its phosphate group to the conserved aspartic acid residue in the regulatory domain of WalR. In turn, WalR binds to the upstream promoter regions of the target genes to positively and negatively regulate their expression.</text>
</comment>
<comment type="catalytic activity">
    <reaction evidence="3">
        <text>ATP + protein L-histidine = ADP + protein N-phospho-L-histidine.</text>
        <dbReference type="EC" id="2.7.13.3"/>
    </reaction>
</comment>
<comment type="activity regulation">
    <text evidence="3">By zinc. Zinc-binding negatively regulates WalK kinase activity and thus autophosphorylation.</text>
</comment>
<comment type="subunit">
    <text evidence="2">Forms homodimers. Forms homooligomers.</text>
</comment>
<comment type="subcellular location">
    <subcellularLocation>
        <location evidence="9">Cell membrane</location>
        <topology evidence="4">Multi-pass membrane protein</topology>
    </subcellularLocation>
</comment>
<comment type="PTM">
    <text evidence="3">Autophosphorylated.</text>
</comment>
<name>WALK_STAAR</name>
<protein>
    <recommendedName>
        <fullName evidence="9">Sensor protein kinase WalK</fullName>
        <ecNumber evidence="1">2.7.13.3</ecNumber>
    </recommendedName>
</protein>
<feature type="chain" id="PRO_0000353055" description="Sensor protein kinase WalK">
    <location>
        <begin position="1"/>
        <end position="608"/>
    </location>
</feature>
<feature type="transmembrane region" description="Helical" evidence="4">
    <location>
        <begin position="14"/>
        <end position="34"/>
    </location>
</feature>
<feature type="transmembrane region" description="Helical" evidence="4">
    <location>
        <begin position="183"/>
        <end position="203"/>
    </location>
</feature>
<feature type="domain" description="HAMP" evidence="5">
    <location>
        <begin position="204"/>
        <end position="256"/>
    </location>
</feature>
<feature type="domain" description="PAS" evidence="7">
    <location>
        <begin position="261"/>
        <end position="331"/>
    </location>
</feature>
<feature type="domain" description="PAC" evidence="8">
    <location>
        <begin position="314"/>
        <end position="378"/>
    </location>
</feature>
<feature type="domain" description="Histidine kinase" evidence="6">
    <location>
        <begin position="382"/>
        <end position="600"/>
    </location>
</feature>
<feature type="binding site" evidence="3">
    <location>
        <position position="271"/>
    </location>
    <ligand>
        <name>Zn(2+)</name>
        <dbReference type="ChEBI" id="CHEBI:29105"/>
    </ligand>
</feature>
<feature type="binding site" evidence="3">
    <location>
        <position position="274"/>
    </location>
    <ligand>
        <name>Zn(2+)</name>
        <dbReference type="ChEBI" id="CHEBI:29105"/>
    </ligand>
</feature>
<feature type="binding site" evidence="3">
    <location>
        <position position="364"/>
    </location>
    <ligand>
        <name>Zn(2+)</name>
        <dbReference type="ChEBI" id="CHEBI:29105"/>
    </ligand>
</feature>
<feature type="binding site" evidence="3">
    <location>
        <position position="368"/>
    </location>
    <ligand>
        <name>Zn(2+)</name>
        <dbReference type="ChEBI" id="CHEBI:29105"/>
    </ligand>
</feature>
<feature type="modified residue" description="Phosphohistidine; by autocatalysis" evidence="6">
    <location>
        <position position="385"/>
    </location>
</feature>
<gene>
    <name type="primary">walK</name>
    <name type="synonym">vicK</name>
    <name type="synonym">yycG</name>
    <name type="ordered locus">SAR0019</name>
</gene>
<evidence type="ECO:0000250" key="1">
    <source>
        <dbReference type="UniProtKB" id="O34206"/>
    </source>
</evidence>
<evidence type="ECO:0000250" key="2">
    <source>
        <dbReference type="UniProtKB" id="Q2G2U4"/>
    </source>
</evidence>
<evidence type="ECO:0000250" key="3">
    <source>
        <dbReference type="UniProtKB" id="Q9RDT3"/>
    </source>
</evidence>
<evidence type="ECO:0000255" key="4"/>
<evidence type="ECO:0000255" key="5">
    <source>
        <dbReference type="PROSITE-ProRule" id="PRU00102"/>
    </source>
</evidence>
<evidence type="ECO:0000255" key="6">
    <source>
        <dbReference type="PROSITE-ProRule" id="PRU00107"/>
    </source>
</evidence>
<evidence type="ECO:0000255" key="7">
    <source>
        <dbReference type="PROSITE-ProRule" id="PRU00140"/>
    </source>
</evidence>
<evidence type="ECO:0000255" key="8">
    <source>
        <dbReference type="PROSITE-ProRule" id="PRU00141"/>
    </source>
</evidence>
<evidence type="ECO:0000305" key="9"/>
<dbReference type="EC" id="2.7.13.3" evidence="1"/>
<dbReference type="EMBL" id="BX571856">
    <property type="protein sequence ID" value="CAG39047.1"/>
    <property type="molecule type" value="Genomic_DNA"/>
</dbReference>
<dbReference type="RefSeq" id="WP_000871610.1">
    <property type="nucleotide sequence ID" value="NC_002952.2"/>
</dbReference>
<dbReference type="SMR" id="Q6GKS6"/>
<dbReference type="KEGG" id="sar:SAR0019"/>
<dbReference type="HOGENOM" id="CLU_000445_89_2_9"/>
<dbReference type="Proteomes" id="UP000000596">
    <property type="component" value="Chromosome"/>
</dbReference>
<dbReference type="GO" id="GO:0005886">
    <property type="term" value="C:plasma membrane"/>
    <property type="evidence" value="ECO:0007669"/>
    <property type="project" value="UniProtKB-SubCell"/>
</dbReference>
<dbReference type="GO" id="GO:0005524">
    <property type="term" value="F:ATP binding"/>
    <property type="evidence" value="ECO:0007669"/>
    <property type="project" value="UniProtKB-KW"/>
</dbReference>
<dbReference type="GO" id="GO:0046872">
    <property type="term" value="F:metal ion binding"/>
    <property type="evidence" value="ECO:0007669"/>
    <property type="project" value="UniProtKB-KW"/>
</dbReference>
<dbReference type="GO" id="GO:0000156">
    <property type="term" value="F:phosphorelay response regulator activity"/>
    <property type="evidence" value="ECO:0007669"/>
    <property type="project" value="TreeGrafter"/>
</dbReference>
<dbReference type="GO" id="GO:0000155">
    <property type="term" value="F:phosphorelay sensor kinase activity"/>
    <property type="evidence" value="ECO:0007669"/>
    <property type="project" value="InterPro"/>
</dbReference>
<dbReference type="GO" id="GO:0030295">
    <property type="term" value="F:protein kinase activator activity"/>
    <property type="evidence" value="ECO:0007669"/>
    <property type="project" value="TreeGrafter"/>
</dbReference>
<dbReference type="GO" id="GO:0007234">
    <property type="term" value="P:osmosensory signaling via phosphorelay pathway"/>
    <property type="evidence" value="ECO:0007669"/>
    <property type="project" value="TreeGrafter"/>
</dbReference>
<dbReference type="CDD" id="cd06225">
    <property type="entry name" value="HAMP"/>
    <property type="match status" value="1"/>
</dbReference>
<dbReference type="CDD" id="cd00075">
    <property type="entry name" value="HATPase"/>
    <property type="match status" value="1"/>
</dbReference>
<dbReference type="CDD" id="cd00082">
    <property type="entry name" value="HisKA"/>
    <property type="match status" value="1"/>
</dbReference>
<dbReference type="CDD" id="cd00130">
    <property type="entry name" value="PAS"/>
    <property type="match status" value="1"/>
</dbReference>
<dbReference type="FunFam" id="1.10.8.500:FF:000001">
    <property type="entry name" value="Cell wall metabolism sensor histidine kinase"/>
    <property type="match status" value="1"/>
</dbReference>
<dbReference type="FunFam" id="3.30.450.20:FF:000037">
    <property type="entry name" value="Cell wall metabolism sensor histidine kinase"/>
    <property type="match status" value="1"/>
</dbReference>
<dbReference type="FunFam" id="3.30.565.10:FF:000006">
    <property type="entry name" value="Sensor histidine kinase WalK"/>
    <property type="match status" value="1"/>
</dbReference>
<dbReference type="FunFam" id="1.10.287.130:FF:000001">
    <property type="entry name" value="Two-component sensor histidine kinase"/>
    <property type="match status" value="1"/>
</dbReference>
<dbReference type="Gene3D" id="1.10.287.130">
    <property type="match status" value="1"/>
</dbReference>
<dbReference type="Gene3D" id="1.10.8.500">
    <property type="entry name" value="HAMP domain in histidine kinase"/>
    <property type="match status" value="1"/>
</dbReference>
<dbReference type="Gene3D" id="3.30.565.10">
    <property type="entry name" value="Histidine kinase-like ATPase, C-terminal domain"/>
    <property type="match status" value="1"/>
</dbReference>
<dbReference type="Gene3D" id="3.30.450.20">
    <property type="entry name" value="PAS domain"/>
    <property type="match status" value="2"/>
</dbReference>
<dbReference type="InterPro" id="IPR003660">
    <property type="entry name" value="HAMP_dom"/>
</dbReference>
<dbReference type="InterPro" id="IPR036890">
    <property type="entry name" value="HATPase_C_sf"/>
</dbReference>
<dbReference type="InterPro" id="IPR005467">
    <property type="entry name" value="His_kinase_dom"/>
</dbReference>
<dbReference type="InterPro" id="IPR003661">
    <property type="entry name" value="HisK_dim/P_dom"/>
</dbReference>
<dbReference type="InterPro" id="IPR036097">
    <property type="entry name" value="HisK_dim/P_sf"/>
</dbReference>
<dbReference type="InterPro" id="IPR052545">
    <property type="entry name" value="Light-responsive_reg"/>
</dbReference>
<dbReference type="InterPro" id="IPR000014">
    <property type="entry name" value="PAS"/>
</dbReference>
<dbReference type="InterPro" id="IPR000700">
    <property type="entry name" value="PAS-assoc_C"/>
</dbReference>
<dbReference type="InterPro" id="IPR035965">
    <property type="entry name" value="PAS-like_dom_sf"/>
</dbReference>
<dbReference type="InterPro" id="IPR049814">
    <property type="entry name" value="Resp_reg_WalK"/>
</dbReference>
<dbReference type="InterPro" id="IPR029151">
    <property type="entry name" value="Sensor-like_sf"/>
</dbReference>
<dbReference type="InterPro" id="IPR004358">
    <property type="entry name" value="Sig_transdc_His_kin-like_C"/>
</dbReference>
<dbReference type="NCBIfam" id="NF033092">
    <property type="entry name" value="HK_WalK"/>
    <property type="match status" value="1"/>
</dbReference>
<dbReference type="NCBIfam" id="TIGR00229">
    <property type="entry name" value="sensory_box"/>
    <property type="match status" value="1"/>
</dbReference>
<dbReference type="PANTHER" id="PTHR42878:SF7">
    <property type="entry name" value="SENSOR HISTIDINE KINASE GLRK"/>
    <property type="match status" value="1"/>
</dbReference>
<dbReference type="PANTHER" id="PTHR42878">
    <property type="entry name" value="TWO-COMPONENT HISTIDINE KINASE"/>
    <property type="match status" value="1"/>
</dbReference>
<dbReference type="Pfam" id="PF23846">
    <property type="entry name" value="Cache_WalK"/>
    <property type="match status" value="1"/>
</dbReference>
<dbReference type="Pfam" id="PF00672">
    <property type="entry name" value="HAMP"/>
    <property type="match status" value="1"/>
</dbReference>
<dbReference type="Pfam" id="PF02518">
    <property type="entry name" value="HATPase_c"/>
    <property type="match status" value="1"/>
</dbReference>
<dbReference type="Pfam" id="PF00512">
    <property type="entry name" value="HisKA"/>
    <property type="match status" value="1"/>
</dbReference>
<dbReference type="Pfam" id="PF13426">
    <property type="entry name" value="PAS_9"/>
    <property type="match status" value="1"/>
</dbReference>
<dbReference type="PRINTS" id="PR00344">
    <property type="entry name" value="BCTRLSENSOR"/>
</dbReference>
<dbReference type="SMART" id="SM00304">
    <property type="entry name" value="HAMP"/>
    <property type="match status" value="1"/>
</dbReference>
<dbReference type="SMART" id="SM00387">
    <property type="entry name" value="HATPase_c"/>
    <property type="match status" value="1"/>
</dbReference>
<dbReference type="SMART" id="SM00388">
    <property type="entry name" value="HisKA"/>
    <property type="match status" value="1"/>
</dbReference>
<dbReference type="SMART" id="SM00091">
    <property type="entry name" value="PAS"/>
    <property type="match status" value="1"/>
</dbReference>
<dbReference type="SUPFAM" id="SSF55874">
    <property type="entry name" value="ATPase domain of HSP90 chaperone/DNA topoisomerase II/histidine kinase"/>
    <property type="match status" value="1"/>
</dbReference>
<dbReference type="SUPFAM" id="SSF158472">
    <property type="entry name" value="HAMP domain-like"/>
    <property type="match status" value="1"/>
</dbReference>
<dbReference type="SUPFAM" id="SSF47384">
    <property type="entry name" value="Homodimeric domain of signal transducing histidine kinase"/>
    <property type="match status" value="1"/>
</dbReference>
<dbReference type="SUPFAM" id="SSF55785">
    <property type="entry name" value="PYP-like sensor domain (PAS domain)"/>
    <property type="match status" value="1"/>
</dbReference>
<dbReference type="SUPFAM" id="SSF103190">
    <property type="entry name" value="Sensory domain-like"/>
    <property type="match status" value="1"/>
</dbReference>
<dbReference type="PROSITE" id="PS50885">
    <property type="entry name" value="HAMP"/>
    <property type="match status" value="1"/>
</dbReference>
<dbReference type="PROSITE" id="PS50109">
    <property type="entry name" value="HIS_KIN"/>
    <property type="match status" value="1"/>
</dbReference>
<dbReference type="PROSITE" id="PS50113">
    <property type="entry name" value="PAC"/>
    <property type="match status" value="1"/>
</dbReference>
<dbReference type="PROSITE" id="PS50112">
    <property type="entry name" value="PAS"/>
    <property type="match status" value="1"/>
</dbReference>